<dbReference type="EMBL" id="AL591983">
    <property type="protein sequence ID" value="CAD00687.1"/>
    <property type="molecule type" value="Genomic_DNA"/>
</dbReference>
<dbReference type="PIR" id="AI1400">
    <property type="entry name" value="AI1400"/>
</dbReference>
<dbReference type="RefSeq" id="NP_466132.1">
    <property type="nucleotide sequence ID" value="NC_003210.1"/>
</dbReference>
<dbReference type="RefSeq" id="WP_003720928.1">
    <property type="nucleotide sequence ID" value="NZ_CP149495.1"/>
</dbReference>
<dbReference type="PDB" id="7NHN">
    <property type="method" value="EM"/>
    <property type="resolution" value="2.90 A"/>
    <property type="chains" value="9=1-37"/>
</dbReference>
<dbReference type="PDB" id="8A57">
    <property type="method" value="EM"/>
    <property type="resolution" value="2.30 A"/>
    <property type="chains" value="9=1-37"/>
</dbReference>
<dbReference type="PDB" id="8A5I">
    <property type="method" value="EM"/>
    <property type="resolution" value="2.30 A"/>
    <property type="chains" value="9=1-37"/>
</dbReference>
<dbReference type="PDB" id="8A63">
    <property type="method" value="EM"/>
    <property type="resolution" value="3.10 A"/>
    <property type="chains" value="9=1-37"/>
</dbReference>
<dbReference type="PDBsum" id="7NHN"/>
<dbReference type="PDBsum" id="8A57"/>
<dbReference type="PDBsum" id="8A5I"/>
<dbReference type="PDBsum" id="8A63"/>
<dbReference type="EMDB" id="EMD-12334"/>
<dbReference type="EMDB" id="EMD-15161"/>
<dbReference type="EMDB" id="EMD-15175"/>
<dbReference type="EMDB" id="EMD-15204"/>
<dbReference type="SMR" id="P66290"/>
<dbReference type="STRING" id="169963.gene:17595327"/>
<dbReference type="PaxDb" id="169963-lmo2609"/>
<dbReference type="EnsemblBacteria" id="CAD00687">
    <property type="protein sequence ID" value="CAD00687"/>
    <property type="gene ID" value="CAD00687"/>
</dbReference>
<dbReference type="GeneID" id="93240490"/>
<dbReference type="GeneID" id="985422"/>
<dbReference type="KEGG" id="lmo:lmo2609"/>
<dbReference type="PATRIC" id="fig|169963.11.peg.2673"/>
<dbReference type="eggNOG" id="COG0257">
    <property type="taxonomic scope" value="Bacteria"/>
</dbReference>
<dbReference type="HOGENOM" id="CLU_135723_6_2_9"/>
<dbReference type="OrthoDB" id="9802520at2"/>
<dbReference type="PhylomeDB" id="P66290"/>
<dbReference type="BioCyc" id="LMON169963:LMO2609-MONOMER"/>
<dbReference type="Proteomes" id="UP000000817">
    <property type="component" value="Chromosome"/>
</dbReference>
<dbReference type="GO" id="GO:0005737">
    <property type="term" value="C:cytoplasm"/>
    <property type="evidence" value="ECO:0007669"/>
    <property type="project" value="UniProtKB-ARBA"/>
</dbReference>
<dbReference type="GO" id="GO:1990904">
    <property type="term" value="C:ribonucleoprotein complex"/>
    <property type="evidence" value="ECO:0007669"/>
    <property type="project" value="UniProtKB-KW"/>
</dbReference>
<dbReference type="GO" id="GO:0005840">
    <property type="term" value="C:ribosome"/>
    <property type="evidence" value="ECO:0007669"/>
    <property type="project" value="UniProtKB-KW"/>
</dbReference>
<dbReference type="GO" id="GO:0003735">
    <property type="term" value="F:structural constituent of ribosome"/>
    <property type="evidence" value="ECO:0007669"/>
    <property type="project" value="InterPro"/>
</dbReference>
<dbReference type="GO" id="GO:0006412">
    <property type="term" value="P:translation"/>
    <property type="evidence" value="ECO:0007669"/>
    <property type="project" value="UniProtKB-UniRule"/>
</dbReference>
<dbReference type="HAMAP" id="MF_00251">
    <property type="entry name" value="Ribosomal_bL36"/>
    <property type="match status" value="1"/>
</dbReference>
<dbReference type="InterPro" id="IPR000473">
    <property type="entry name" value="Ribosomal_bL36"/>
</dbReference>
<dbReference type="InterPro" id="IPR035977">
    <property type="entry name" value="Ribosomal_bL36_sp"/>
</dbReference>
<dbReference type="NCBIfam" id="TIGR01022">
    <property type="entry name" value="rpmJ_bact"/>
    <property type="match status" value="1"/>
</dbReference>
<dbReference type="PANTHER" id="PTHR42888">
    <property type="entry name" value="50S RIBOSOMAL PROTEIN L36, CHLOROPLASTIC"/>
    <property type="match status" value="1"/>
</dbReference>
<dbReference type="PANTHER" id="PTHR42888:SF1">
    <property type="entry name" value="LARGE RIBOSOMAL SUBUNIT PROTEIN BL36C"/>
    <property type="match status" value="1"/>
</dbReference>
<dbReference type="Pfam" id="PF00444">
    <property type="entry name" value="Ribosomal_L36"/>
    <property type="match status" value="1"/>
</dbReference>
<dbReference type="SUPFAM" id="SSF57840">
    <property type="entry name" value="Ribosomal protein L36"/>
    <property type="match status" value="1"/>
</dbReference>
<dbReference type="PROSITE" id="PS00828">
    <property type="entry name" value="RIBOSOMAL_L36"/>
    <property type="match status" value="1"/>
</dbReference>
<evidence type="ECO:0000255" key="1">
    <source>
        <dbReference type="HAMAP-Rule" id="MF_00251"/>
    </source>
</evidence>
<evidence type="ECO:0000305" key="2"/>
<evidence type="ECO:0007829" key="3">
    <source>
        <dbReference type="PDB" id="8A57"/>
    </source>
</evidence>
<proteinExistence type="evidence at protein level"/>
<comment type="similarity">
    <text evidence="1">Belongs to the bacterial ribosomal protein bL36 family.</text>
</comment>
<feature type="chain" id="PRO_0000126208" description="Large ribosomal subunit protein bL36">
    <location>
        <begin position="1"/>
        <end position="37"/>
    </location>
</feature>
<feature type="strand" evidence="3">
    <location>
        <begin position="10"/>
        <end position="13"/>
    </location>
</feature>
<feature type="strand" evidence="3">
    <location>
        <begin position="15"/>
        <end position="19"/>
    </location>
</feature>
<feature type="strand" evidence="3">
    <location>
        <begin position="22"/>
        <end position="26"/>
    </location>
</feature>
<feature type="helix" evidence="3">
    <location>
        <begin position="30"/>
        <end position="32"/>
    </location>
</feature>
<reference key="1">
    <citation type="journal article" date="2001" name="Science">
        <title>Comparative genomics of Listeria species.</title>
        <authorList>
            <person name="Glaser P."/>
            <person name="Frangeul L."/>
            <person name="Buchrieser C."/>
            <person name="Rusniok C."/>
            <person name="Amend A."/>
            <person name="Baquero F."/>
            <person name="Berche P."/>
            <person name="Bloecker H."/>
            <person name="Brandt P."/>
            <person name="Chakraborty T."/>
            <person name="Charbit A."/>
            <person name="Chetouani F."/>
            <person name="Couve E."/>
            <person name="de Daruvar A."/>
            <person name="Dehoux P."/>
            <person name="Domann E."/>
            <person name="Dominguez-Bernal G."/>
            <person name="Duchaud E."/>
            <person name="Durant L."/>
            <person name="Dussurget O."/>
            <person name="Entian K.-D."/>
            <person name="Fsihi H."/>
            <person name="Garcia-del Portillo F."/>
            <person name="Garrido P."/>
            <person name="Gautier L."/>
            <person name="Goebel W."/>
            <person name="Gomez-Lopez N."/>
            <person name="Hain T."/>
            <person name="Hauf J."/>
            <person name="Jackson D."/>
            <person name="Jones L.-M."/>
            <person name="Kaerst U."/>
            <person name="Kreft J."/>
            <person name="Kuhn M."/>
            <person name="Kunst F."/>
            <person name="Kurapkat G."/>
            <person name="Madueno E."/>
            <person name="Maitournam A."/>
            <person name="Mata Vicente J."/>
            <person name="Ng E."/>
            <person name="Nedjari H."/>
            <person name="Nordsiek G."/>
            <person name="Novella S."/>
            <person name="de Pablos B."/>
            <person name="Perez-Diaz J.-C."/>
            <person name="Purcell R."/>
            <person name="Remmel B."/>
            <person name="Rose M."/>
            <person name="Schlueter T."/>
            <person name="Simoes N."/>
            <person name="Tierrez A."/>
            <person name="Vazquez-Boland J.-A."/>
            <person name="Voss H."/>
            <person name="Wehland J."/>
            <person name="Cossart P."/>
        </authorList>
    </citation>
    <scope>NUCLEOTIDE SEQUENCE [LARGE SCALE GENOMIC DNA]</scope>
    <source>
        <strain>ATCC BAA-679 / EGD-e</strain>
    </source>
</reference>
<organism>
    <name type="scientific">Listeria monocytogenes serovar 1/2a (strain ATCC BAA-679 / EGD-e)</name>
    <dbReference type="NCBI Taxonomy" id="169963"/>
    <lineage>
        <taxon>Bacteria</taxon>
        <taxon>Bacillati</taxon>
        <taxon>Bacillota</taxon>
        <taxon>Bacilli</taxon>
        <taxon>Bacillales</taxon>
        <taxon>Listeriaceae</taxon>
        <taxon>Listeria</taxon>
    </lineage>
</organism>
<accession>P66290</accession>
<accession>Q927N0</accession>
<name>RL36_LISMO</name>
<gene>
    <name evidence="1" type="primary">rpmJ</name>
    <name type="ordered locus">lmo2609</name>
</gene>
<protein>
    <recommendedName>
        <fullName evidence="1">Large ribosomal subunit protein bL36</fullName>
    </recommendedName>
    <alternativeName>
        <fullName evidence="2">50S ribosomal protein L36</fullName>
    </alternativeName>
</protein>
<keyword id="KW-0002">3D-structure</keyword>
<keyword id="KW-1185">Reference proteome</keyword>
<keyword id="KW-0687">Ribonucleoprotein</keyword>
<keyword id="KW-0689">Ribosomal protein</keyword>
<sequence>MKVRPSVKPMCEKCKVIRRKGKVMVICENPKHKQKQG</sequence>